<feature type="chain" id="PRO_1000193854" description="Large ribosomal subunit protein bL19">
    <location>
        <begin position="1"/>
        <end position="115"/>
    </location>
</feature>
<keyword id="KW-0687">Ribonucleoprotein</keyword>
<keyword id="KW-0689">Ribosomal protein</keyword>
<gene>
    <name evidence="1" type="primary">rplS</name>
    <name type="ordered locus">LCABL_18100</name>
</gene>
<name>RL19_LACCB</name>
<proteinExistence type="inferred from homology"/>
<protein>
    <recommendedName>
        <fullName evidence="1">Large ribosomal subunit protein bL19</fullName>
    </recommendedName>
    <alternativeName>
        <fullName evidence="2">50S ribosomal protein L19</fullName>
    </alternativeName>
</protein>
<comment type="function">
    <text evidence="1">This protein is located at the 30S-50S ribosomal subunit interface and may play a role in the structure and function of the aminoacyl-tRNA binding site.</text>
</comment>
<comment type="similarity">
    <text evidence="1">Belongs to the bacterial ribosomal protein bL19 family.</text>
</comment>
<accession>B3WET9</accession>
<sequence length="115" mass="13377">MNPLIQEITKKQLRDDIPDFRPGDNVRVHAKIVEGERERIQLFEGVVIKRHGVGISATYTVRKISNGVGVERTFPLHSPRVEKIEVTRHGQVRRAKLYYLRALRGKAARIREKRR</sequence>
<evidence type="ECO:0000255" key="1">
    <source>
        <dbReference type="HAMAP-Rule" id="MF_00402"/>
    </source>
</evidence>
<evidence type="ECO:0000305" key="2"/>
<organism>
    <name type="scientific">Lacticaseibacillus casei (strain BL23)</name>
    <name type="common">Lactobacillus casei</name>
    <dbReference type="NCBI Taxonomy" id="543734"/>
    <lineage>
        <taxon>Bacteria</taxon>
        <taxon>Bacillati</taxon>
        <taxon>Bacillota</taxon>
        <taxon>Bacilli</taxon>
        <taxon>Lactobacillales</taxon>
        <taxon>Lactobacillaceae</taxon>
        <taxon>Lacticaseibacillus</taxon>
    </lineage>
</organism>
<dbReference type="EMBL" id="FM177140">
    <property type="protein sequence ID" value="CAQ66890.1"/>
    <property type="molecule type" value="Genomic_DNA"/>
</dbReference>
<dbReference type="SMR" id="B3WET9"/>
<dbReference type="KEGG" id="lcb:LCABL_18100"/>
<dbReference type="HOGENOM" id="CLU_103507_2_2_9"/>
<dbReference type="GO" id="GO:0022625">
    <property type="term" value="C:cytosolic large ribosomal subunit"/>
    <property type="evidence" value="ECO:0007669"/>
    <property type="project" value="TreeGrafter"/>
</dbReference>
<dbReference type="GO" id="GO:0003735">
    <property type="term" value="F:structural constituent of ribosome"/>
    <property type="evidence" value="ECO:0007669"/>
    <property type="project" value="InterPro"/>
</dbReference>
<dbReference type="GO" id="GO:0006412">
    <property type="term" value="P:translation"/>
    <property type="evidence" value="ECO:0007669"/>
    <property type="project" value="UniProtKB-UniRule"/>
</dbReference>
<dbReference type="FunFam" id="2.30.30.790:FF:000001">
    <property type="entry name" value="50S ribosomal protein L19"/>
    <property type="match status" value="1"/>
</dbReference>
<dbReference type="Gene3D" id="2.30.30.790">
    <property type="match status" value="1"/>
</dbReference>
<dbReference type="HAMAP" id="MF_00402">
    <property type="entry name" value="Ribosomal_bL19"/>
    <property type="match status" value="1"/>
</dbReference>
<dbReference type="InterPro" id="IPR001857">
    <property type="entry name" value="Ribosomal_bL19"/>
</dbReference>
<dbReference type="InterPro" id="IPR018257">
    <property type="entry name" value="Ribosomal_bL19_CS"/>
</dbReference>
<dbReference type="InterPro" id="IPR038657">
    <property type="entry name" value="Ribosomal_bL19_sf"/>
</dbReference>
<dbReference type="InterPro" id="IPR008991">
    <property type="entry name" value="Translation_prot_SH3-like_sf"/>
</dbReference>
<dbReference type="NCBIfam" id="TIGR01024">
    <property type="entry name" value="rplS_bact"/>
    <property type="match status" value="1"/>
</dbReference>
<dbReference type="PANTHER" id="PTHR15680:SF9">
    <property type="entry name" value="LARGE RIBOSOMAL SUBUNIT PROTEIN BL19M"/>
    <property type="match status" value="1"/>
</dbReference>
<dbReference type="PANTHER" id="PTHR15680">
    <property type="entry name" value="RIBOSOMAL PROTEIN L19"/>
    <property type="match status" value="1"/>
</dbReference>
<dbReference type="Pfam" id="PF01245">
    <property type="entry name" value="Ribosomal_L19"/>
    <property type="match status" value="1"/>
</dbReference>
<dbReference type="PIRSF" id="PIRSF002191">
    <property type="entry name" value="Ribosomal_L19"/>
    <property type="match status" value="1"/>
</dbReference>
<dbReference type="PRINTS" id="PR00061">
    <property type="entry name" value="RIBOSOMALL19"/>
</dbReference>
<dbReference type="SUPFAM" id="SSF50104">
    <property type="entry name" value="Translation proteins SH3-like domain"/>
    <property type="match status" value="1"/>
</dbReference>
<dbReference type="PROSITE" id="PS01015">
    <property type="entry name" value="RIBOSOMAL_L19"/>
    <property type="match status" value="1"/>
</dbReference>
<reference key="1">
    <citation type="submission" date="2008-06" db="EMBL/GenBank/DDBJ databases">
        <title>Lactobacillus casei BL23 complete genome sequence.</title>
        <authorList>
            <person name="Maze A."/>
            <person name="Boel G."/>
            <person name="Bourand A."/>
            <person name="Loux V."/>
            <person name="Gibrat J.F."/>
            <person name="Zuniga M."/>
            <person name="Hartke A."/>
            <person name="Deutscher J."/>
        </authorList>
    </citation>
    <scope>NUCLEOTIDE SEQUENCE [LARGE SCALE GENOMIC DNA]</scope>
    <source>
        <strain>BL23</strain>
    </source>
</reference>